<evidence type="ECO:0000250" key="1"/>
<evidence type="ECO:0000255" key="2"/>
<evidence type="ECO:0000255" key="3">
    <source>
        <dbReference type="PROSITE-ProRule" id="PRU00711"/>
    </source>
</evidence>
<accession>P18396</accession>
<reference key="1">
    <citation type="journal article" date="1989" name="J. Bacteriol.">
        <title>Rhizobium meliloti fixGHI sequence predicts involvement of a specific cation pump in symbiotic nitrogen fixation.</title>
        <authorList>
            <person name="Kahn D."/>
            <person name="David M."/>
            <person name="Domergue O."/>
            <person name="Daveran M.-L."/>
            <person name="Ghai J."/>
            <person name="Hirsch P.R."/>
            <person name="Batut J."/>
        </authorList>
    </citation>
    <scope>NUCLEOTIDE SEQUENCE [GENOMIC DNA]</scope>
    <source>
        <strain>RCR2011 / SU47</strain>
    </source>
</reference>
<reference key="2">
    <citation type="journal article" date="2001" name="Proc. Natl. Acad. Sci. U.S.A.">
        <title>Nucleotide sequence and predicted functions of the entire Sinorhizobium meliloti pSymA megaplasmid.</title>
        <authorList>
            <person name="Barnett M.J."/>
            <person name="Fisher R.F."/>
            <person name="Jones T."/>
            <person name="Komp C."/>
            <person name="Abola A.P."/>
            <person name="Barloy-Hubler F."/>
            <person name="Bowser L."/>
            <person name="Capela D."/>
            <person name="Galibert F."/>
            <person name="Gouzy J."/>
            <person name="Gurjal M."/>
            <person name="Hong A."/>
            <person name="Huizar L."/>
            <person name="Hyman R.W."/>
            <person name="Kahn D."/>
            <person name="Kahn M.L."/>
            <person name="Kalman S."/>
            <person name="Keating D.H."/>
            <person name="Palm C."/>
            <person name="Peck M.C."/>
            <person name="Surzycki R."/>
            <person name="Wells D.H."/>
            <person name="Yeh K.-C."/>
            <person name="Davis R.W."/>
            <person name="Federspiel N.A."/>
            <person name="Long S.R."/>
        </authorList>
    </citation>
    <scope>NUCLEOTIDE SEQUENCE [LARGE SCALE GENOMIC DNA]</scope>
    <source>
        <strain>1021</strain>
    </source>
</reference>
<reference key="3">
    <citation type="journal article" date="2001" name="Science">
        <title>The composite genome of the legume symbiont Sinorhizobium meliloti.</title>
        <authorList>
            <person name="Galibert F."/>
            <person name="Finan T.M."/>
            <person name="Long S.R."/>
            <person name="Puehler A."/>
            <person name="Abola P."/>
            <person name="Ampe F."/>
            <person name="Barloy-Hubler F."/>
            <person name="Barnett M.J."/>
            <person name="Becker A."/>
            <person name="Boistard P."/>
            <person name="Bothe G."/>
            <person name="Boutry M."/>
            <person name="Bowser L."/>
            <person name="Buhrmester J."/>
            <person name="Cadieu E."/>
            <person name="Capela D."/>
            <person name="Chain P."/>
            <person name="Cowie A."/>
            <person name="Davis R.W."/>
            <person name="Dreano S."/>
            <person name="Federspiel N.A."/>
            <person name="Fisher R.F."/>
            <person name="Gloux S."/>
            <person name="Godrie T."/>
            <person name="Goffeau A."/>
            <person name="Golding B."/>
            <person name="Gouzy J."/>
            <person name="Gurjal M."/>
            <person name="Hernandez-Lucas I."/>
            <person name="Hong A."/>
            <person name="Huizar L."/>
            <person name="Hyman R.W."/>
            <person name="Jones T."/>
            <person name="Kahn D."/>
            <person name="Kahn M.L."/>
            <person name="Kalman S."/>
            <person name="Keating D.H."/>
            <person name="Kiss E."/>
            <person name="Komp C."/>
            <person name="Lelaure V."/>
            <person name="Masuy D."/>
            <person name="Palm C."/>
            <person name="Peck M.C."/>
            <person name="Pohl T.M."/>
            <person name="Portetelle D."/>
            <person name="Purnelle B."/>
            <person name="Ramsperger U."/>
            <person name="Surzycki R."/>
            <person name="Thebault P."/>
            <person name="Vandenbol M."/>
            <person name="Vorhoelter F.J."/>
            <person name="Weidner S."/>
            <person name="Wells D.H."/>
            <person name="Wong K."/>
            <person name="Yeh K.-C."/>
            <person name="Batut J."/>
        </authorList>
    </citation>
    <scope>NUCLEOTIDE SEQUENCE [LARGE SCALE GENOMIC DNA]</scope>
    <source>
        <strain>1021</strain>
    </source>
</reference>
<feature type="chain" id="PRO_0000159236" description="Nitrogen fixation protein FixG">
    <location>
        <begin position="1"/>
        <end position="524"/>
    </location>
</feature>
<feature type="transmembrane region" description="Helical" evidence="2">
    <location>
        <begin position="99"/>
        <end position="119"/>
    </location>
</feature>
<feature type="transmembrane region" description="Helical" evidence="2">
    <location>
        <begin position="173"/>
        <end position="193"/>
    </location>
</feature>
<feature type="transmembrane region" description="Helical" evidence="2">
    <location>
        <begin position="207"/>
        <end position="227"/>
    </location>
</feature>
<feature type="transmembrane region" description="Helical" evidence="2">
    <location>
        <begin position="380"/>
        <end position="400"/>
    </location>
</feature>
<feature type="domain" description="4Fe-4S ferredoxin-type" evidence="3">
    <location>
        <begin position="272"/>
        <end position="299"/>
    </location>
</feature>
<feature type="binding site" evidence="1">
    <location>
        <position position="280"/>
    </location>
    <ligand>
        <name>[4Fe-4S] cluster</name>
        <dbReference type="ChEBI" id="CHEBI:49883"/>
    </ligand>
</feature>
<feature type="binding site" evidence="1">
    <location>
        <position position="283"/>
    </location>
    <ligand>
        <name>[4Fe-4S] cluster</name>
        <dbReference type="ChEBI" id="CHEBI:49883"/>
    </ligand>
</feature>
<feature type="binding site" evidence="1">
    <location>
        <position position="286"/>
    </location>
    <ligand>
        <name>[4Fe-4S] cluster</name>
        <dbReference type="ChEBI" id="CHEBI:49883"/>
    </ligand>
</feature>
<feature type="binding site" evidence="1">
    <location>
        <position position="290"/>
    </location>
    <ligand>
        <name>[4Fe-4S] cluster</name>
        <dbReference type="ChEBI" id="CHEBI:49883"/>
    </ligand>
</feature>
<feature type="binding site" evidence="1">
    <location>
        <position position="304"/>
    </location>
    <ligand>
        <name>[4Fe-4S] cluster</name>
        <dbReference type="ChEBI" id="CHEBI:49883"/>
    </ligand>
</feature>
<feature type="binding site" evidence="1">
    <location>
        <position position="307"/>
    </location>
    <ligand>
        <name>[4Fe-4S] cluster</name>
        <dbReference type="ChEBI" id="CHEBI:49883"/>
    </ligand>
</feature>
<feature type="binding site" evidence="1">
    <location>
        <position position="310"/>
    </location>
    <ligand>
        <name>[4Fe-4S] cluster</name>
        <dbReference type="ChEBI" id="CHEBI:49883"/>
    </ligand>
</feature>
<feature type="binding site" evidence="1">
    <location>
        <position position="314"/>
    </location>
    <ligand>
        <name>[4Fe-4S] cluster</name>
        <dbReference type="ChEBI" id="CHEBI:49883"/>
    </ligand>
</feature>
<protein>
    <recommendedName>
        <fullName>Nitrogen fixation protein FixG</fullName>
    </recommendedName>
</protein>
<organism>
    <name type="scientific">Rhizobium meliloti (strain 1021)</name>
    <name type="common">Ensifer meliloti</name>
    <name type="synonym">Sinorhizobium meliloti</name>
    <dbReference type="NCBI Taxonomy" id="266834"/>
    <lineage>
        <taxon>Bacteria</taxon>
        <taxon>Pseudomonadati</taxon>
        <taxon>Pseudomonadota</taxon>
        <taxon>Alphaproteobacteria</taxon>
        <taxon>Hyphomicrobiales</taxon>
        <taxon>Rhizobiaceae</taxon>
        <taxon>Sinorhizobium/Ensifer group</taxon>
        <taxon>Sinorhizobium</taxon>
    </lineage>
</organism>
<gene>
    <name type="primary">fixG</name>
    <name type="ordered locus">RA0661</name>
    <name type="ORF">SMa1211</name>
</gene>
<dbReference type="EMBL" id="Z21854">
    <property type="protein sequence ID" value="CAA79905.1"/>
    <property type="molecule type" value="Genomic_DNA"/>
</dbReference>
<dbReference type="EMBL" id="AE006469">
    <property type="protein sequence ID" value="AAK65319.1"/>
    <property type="molecule type" value="Genomic_DNA"/>
</dbReference>
<dbReference type="PIR" id="A32052">
    <property type="entry name" value="A32052"/>
</dbReference>
<dbReference type="PIR" id="E95344">
    <property type="entry name" value="E95344"/>
</dbReference>
<dbReference type="RefSeq" id="NP_435907.1">
    <property type="nucleotide sequence ID" value="NC_003037.1"/>
</dbReference>
<dbReference type="SMR" id="P18396"/>
<dbReference type="EnsemblBacteria" id="AAK65319">
    <property type="protein sequence ID" value="AAK65319"/>
    <property type="gene ID" value="SMa1211"/>
</dbReference>
<dbReference type="KEGG" id="sme:SMa1211"/>
<dbReference type="PATRIC" id="fig|266834.11.peg.681"/>
<dbReference type="HOGENOM" id="CLU_032118_0_0_5"/>
<dbReference type="OrthoDB" id="9811700at2"/>
<dbReference type="Proteomes" id="UP000001976">
    <property type="component" value="Plasmid pSymA"/>
</dbReference>
<dbReference type="GO" id="GO:0005886">
    <property type="term" value="C:plasma membrane"/>
    <property type="evidence" value="ECO:0007669"/>
    <property type="project" value="UniProtKB-SubCell"/>
</dbReference>
<dbReference type="GO" id="GO:0051539">
    <property type="term" value="F:4 iron, 4 sulfur cluster binding"/>
    <property type="evidence" value="ECO:0007669"/>
    <property type="project" value="UniProtKB-KW"/>
</dbReference>
<dbReference type="GO" id="GO:0046872">
    <property type="term" value="F:metal ion binding"/>
    <property type="evidence" value="ECO:0007669"/>
    <property type="project" value="UniProtKB-KW"/>
</dbReference>
<dbReference type="GO" id="GO:0009399">
    <property type="term" value="P:nitrogen fixation"/>
    <property type="evidence" value="ECO:0007669"/>
    <property type="project" value="UniProtKB-KW"/>
</dbReference>
<dbReference type="Gene3D" id="1.10.1060.10">
    <property type="entry name" value="Alpha-helical ferredoxin"/>
    <property type="match status" value="1"/>
</dbReference>
<dbReference type="Gene3D" id="2.60.40.10">
    <property type="entry name" value="Immunoglobulins"/>
    <property type="match status" value="1"/>
</dbReference>
<dbReference type="InterPro" id="IPR017896">
    <property type="entry name" value="4Fe4S_Fe-S-bd"/>
</dbReference>
<dbReference type="InterPro" id="IPR017900">
    <property type="entry name" value="4Fe4S_Fe_S_CS"/>
</dbReference>
<dbReference type="InterPro" id="IPR014116">
    <property type="entry name" value="Cyt_c_oxidase_cbb3_FixG"/>
</dbReference>
<dbReference type="InterPro" id="IPR051684">
    <property type="entry name" value="Electron_Trans/Redox"/>
</dbReference>
<dbReference type="InterPro" id="IPR032879">
    <property type="entry name" value="FixG_C"/>
</dbReference>
<dbReference type="InterPro" id="IPR009051">
    <property type="entry name" value="Helical_ferredxn"/>
</dbReference>
<dbReference type="InterPro" id="IPR013783">
    <property type="entry name" value="Ig-like_fold"/>
</dbReference>
<dbReference type="NCBIfam" id="TIGR02745">
    <property type="entry name" value="ccoG_rdxA_fixG"/>
    <property type="match status" value="1"/>
</dbReference>
<dbReference type="PANTHER" id="PTHR30176">
    <property type="entry name" value="FERREDOXIN-TYPE PROTEIN NAPH"/>
    <property type="match status" value="1"/>
</dbReference>
<dbReference type="PANTHER" id="PTHR30176:SF3">
    <property type="entry name" value="FERREDOXIN-TYPE PROTEIN NAPH"/>
    <property type="match status" value="1"/>
</dbReference>
<dbReference type="Pfam" id="PF13746">
    <property type="entry name" value="Fer4_18"/>
    <property type="match status" value="1"/>
</dbReference>
<dbReference type="Pfam" id="PF12801">
    <property type="entry name" value="Fer4_5"/>
    <property type="match status" value="1"/>
</dbReference>
<dbReference type="Pfam" id="PF11614">
    <property type="entry name" value="FixG_C"/>
    <property type="match status" value="1"/>
</dbReference>
<dbReference type="SUPFAM" id="SSF54862">
    <property type="entry name" value="4Fe-4S ferredoxins"/>
    <property type="match status" value="1"/>
</dbReference>
<dbReference type="PROSITE" id="PS00198">
    <property type="entry name" value="4FE4S_FER_1"/>
    <property type="match status" value="1"/>
</dbReference>
<dbReference type="PROSITE" id="PS51379">
    <property type="entry name" value="4FE4S_FER_2"/>
    <property type="match status" value="1"/>
</dbReference>
<comment type="function">
    <text>FixG is predicted to be involved in a redox process. The four proteins FixG, FixH, FixI, and FixS may participate in a membrane-bound complex coupling the FixI cation pump with a redox process catalyzed by FixG.</text>
</comment>
<comment type="subcellular location">
    <subcellularLocation>
        <location>Cell membrane</location>
        <topology>Multi-pass membrane protein</topology>
    </subcellularLocation>
</comment>
<name>FIXG_RHIME</name>
<proteinExistence type="predicted"/>
<geneLocation type="plasmid">
    <name>pSymA</name>
    <name>megaplasmid 1</name>
</geneLocation>
<sequence length="524" mass="58304">MLHQPKTKATVGRLDAETVNAARVRGPLYEKRRKIFPKRAEGRFRRFKWLVMLVTLGIYYLTPWIRWDRGAHAPDQAVLIDLASRRFYFFFIEIWPQEFFFVAGLLVMAGFGLFLVTSAVGRAWCGYACPQTVWVDLFLVVERFIEGDRNARMRLDAGPWSLDKIRKRVAKHAIWVAIGVATGGAWIFYFADAPSLMSSLVALDAPPVAYTTIGILTATTYVFGGLMREQVCTYMCPWPRIQAAMLDENSLVVTYNDWRGEPRSRHAKKAAAAGEVVGDCVDCNACVAVCPMGIDIRDGQQLECITCALCIDACDGVMDKLGRERGLISYATLSDYAANMALATSGGTAAIDPSRVRNAHGAFRDKVRHLNWRIVFRPRVLVYFGVWATVGFGLLFGLLARDRLELNVLHDRNPQFVVESDGSVRNGYMVKLLNMIPEQRTISLTIEGMPAATMRVAGQATGDGRRVTIGVEPDKVTPLKVFVTLPKGRFAEAEEGFSLIAEDPSSHERDVYQANFNLPGAAGR</sequence>
<keyword id="KW-0004">4Fe-4S</keyword>
<keyword id="KW-1003">Cell membrane</keyword>
<keyword id="KW-0249">Electron transport</keyword>
<keyword id="KW-0408">Iron</keyword>
<keyword id="KW-0411">Iron-sulfur</keyword>
<keyword id="KW-0472">Membrane</keyword>
<keyword id="KW-0479">Metal-binding</keyword>
<keyword id="KW-0535">Nitrogen fixation</keyword>
<keyword id="KW-0614">Plasmid</keyword>
<keyword id="KW-1185">Reference proteome</keyword>
<keyword id="KW-0812">Transmembrane</keyword>
<keyword id="KW-1133">Transmembrane helix</keyword>
<keyword id="KW-0813">Transport</keyword>